<accession>A3Q1S8</accession>
<organism>
    <name type="scientific">Mycobacterium sp. (strain JLS)</name>
    <dbReference type="NCBI Taxonomy" id="164757"/>
    <lineage>
        <taxon>Bacteria</taxon>
        <taxon>Bacillati</taxon>
        <taxon>Actinomycetota</taxon>
        <taxon>Actinomycetes</taxon>
        <taxon>Mycobacteriales</taxon>
        <taxon>Mycobacteriaceae</taxon>
        <taxon>Mycobacterium</taxon>
    </lineage>
</organism>
<keyword id="KW-0004">4Fe-4S</keyword>
<keyword id="KW-0963">Cytoplasm</keyword>
<keyword id="KW-0408">Iron</keyword>
<keyword id="KW-0411">Iron-sulfur</keyword>
<keyword id="KW-0479">Metal-binding</keyword>
<keyword id="KW-0949">S-adenosyl-L-methionine</keyword>
<keyword id="KW-0808">Transferase</keyword>
<protein>
    <recommendedName>
        <fullName evidence="1">Lipoyl synthase</fullName>
        <ecNumber evidence="1">2.8.1.8</ecNumber>
    </recommendedName>
    <alternativeName>
        <fullName evidence="1">Lip-syn</fullName>
        <shortName evidence="1">LS</shortName>
    </alternativeName>
    <alternativeName>
        <fullName evidence="1">Lipoate synthase</fullName>
    </alternativeName>
    <alternativeName>
        <fullName evidence="1">Lipoic acid synthase</fullName>
    </alternativeName>
    <alternativeName>
        <fullName evidence="1">Sulfur insertion protein LipA</fullName>
    </alternativeName>
</protein>
<gene>
    <name evidence="1" type="primary">lipA</name>
    <name type="ordered locus">Mjls_3327</name>
</gene>
<comment type="function">
    <text evidence="1">Catalyzes the radical-mediated insertion of two sulfur atoms into the C-6 and C-8 positions of the octanoyl moiety bound to the lipoyl domains of lipoate-dependent enzymes, thereby converting the octanoylated domains into lipoylated derivatives.</text>
</comment>
<comment type="catalytic activity">
    <reaction evidence="1">
        <text>[[Fe-S] cluster scaffold protein carrying a second [4Fe-4S](2+) cluster] + N(6)-octanoyl-L-lysyl-[protein] + 2 oxidized [2Fe-2S]-[ferredoxin] + 2 S-adenosyl-L-methionine + 4 H(+) = [[Fe-S] cluster scaffold protein] + N(6)-[(R)-dihydrolipoyl]-L-lysyl-[protein] + 4 Fe(3+) + 2 hydrogen sulfide + 2 5'-deoxyadenosine + 2 L-methionine + 2 reduced [2Fe-2S]-[ferredoxin]</text>
        <dbReference type="Rhea" id="RHEA:16585"/>
        <dbReference type="Rhea" id="RHEA-COMP:9928"/>
        <dbReference type="Rhea" id="RHEA-COMP:10000"/>
        <dbReference type="Rhea" id="RHEA-COMP:10001"/>
        <dbReference type="Rhea" id="RHEA-COMP:10475"/>
        <dbReference type="Rhea" id="RHEA-COMP:14568"/>
        <dbReference type="Rhea" id="RHEA-COMP:14569"/>
        <dbReference type="ChEBI" id="CHEBI:15378"/>
        <dbReference type="ChEBI" id="CHEBI:17319"/>
        <dbReference type="ChEBI" id="CHEBI:29034"/>
        <dbReference type="ChEBI" id="CHEBI:29919"/>
        <dbReference type="ChEBI" id="CHEBI:33722"/>
        <dbReference type="ChEBI" id="CHEBI:33737"/>
        <dbReference type="ChEBI" id="CHEBI:33738"/>
        <dbReference type="ChEBI" id="CHEBI:57844"/>
        <dbReference type="ChEBI" id="CHEBI:59789"/>
        <dbReference type="ChEBI" id="CHEBI:78809"/>
        <dbReference type="ChEBI" id="CHEBI:83100"/>
        <dbReference type="EC" id="2.8.1.8"/>
    </reaction>
</comment>
<comment type="cofactor">
    <cofactor evidence="1">
        <name>[4Fe-4S] cluster</name>
        <dbReference type="ChEBI" id="CHEBI:49883"/>
    </cofactor>
    <text evidence="1">Binds 2 [4Fe-4S] clusters per subunit. One cluster is coordinated with 3 cysteines and an exchangeable S-adenosyl-L-methionine.</text>
</comment>
<comment type="pathway">
    <text evidence="1">Protein modification; protein lipoylation via endogenous pathway; protein N(6)-(lipoyl)lysine from octanoyl-[acyl-carrier-protein]: step 2/2.</text>
</comment>
<comment type="subcellular location">
    <subcellularLocation>
        <location evidence="1">Cytoplasm</location>
    </subcellularLocation>
</comment>
<comment type="similarity">
    <text evidence="1">Belongs to the radical SAM superfamily. Lipoyl synthase family.</text>
</comment>
<sequence>MTVTPSGSNGAGSAAPEGRKLLRLEVRNAQTPIERKPPWIKTRARMGPEYKELKSLVKREGLHTVCEEAGCPNIFECWEDREATFLIGGEQCTRRCDFCQIDTGKPSELDRDEPRRVAESVQAMGLRYSTVTGVARDDLPDGGAWLYAETVREIKRLNPNTGVELLIPDFNGDPALLAQVFESRPEVLAHNVETVPRIFKRIRPAFRYERSLAVLTAARDDNLVTKSNLILGMGETPDEVRTALVDLHEAGCDIITITQYLRPSPRHHPVERWVKPEEFVEFAQFAEGLGFAGVLSGPLVRSSYRAGRLYAQAARLKPAATPPVS</sequence>
<feature type="chain" id="PRO_1000012236" description="Lipoyl synthase">
    <location>
        <begin position="1"/>
        <end position="325"/>
    </location>
</feature>
<feature type="domain" description="Radical SAM core" evidence="2">
    <location>
        <begin position="78"/>
        <end position="292"/>
    </location>
</feature>
<feature type="binding site" evidence="1">
    <location>
        <position position="66"/>
    </location>
    <ligand>
        <name>[4Fe-4S] cluster</name>
        <dbReference type="ChEBI" id="CHEBI:49883"/>
        <label>1</label>
    </ligand>
</feature>
<feature type="binding site" evidence="1">
    <location>
        <position position="71"/>
    </location>
    <ligand>
        <name>[4Fe-4S] cluster</name>
        <dbReference type="ChEBI" id="CHEBI:49883"/>
        <label>1</label>
    </ligand>
</feature>
<feature type="binding site" evidence="1">
    <location>
        <position position="77"/>
    </location>
    <ligand>
        <name>[4Fe-4S] cluster</name>
        <dbReference type="ChEBI" id="CHEBI:49883"/>
        <label>1</label>
    </ligand>
</feature>
<feature type="binding site" evidence="1">
    <location>
        <position position="92"/>
    </location>
    <ligand>
        <name>[4Fe-4S] cluster</name>
        <dbReference type="ChEBI" id="CHEBI:49883"/>
        <label>2</label>
        <note>4Fe-4S-S-AdoMet</note>
    </ligand>
</feature>
<feature type="binding site" evidence="1">
    <location>
        <position position="96"/>
    </location>
    <ligand>
        <name>[4Fe-4S] cluster</name>
        <dbReference type="ChEBI" id="CHEBI:49883"/>
        <label>2</label>
        <note>4Fe-4S-S-AdoMet</note>
    </ligand>
</feature>
<feature type="binding site" evidence="1">
    <location>
        <position position="99"/>
    </location>
    <ligand>
        <name>[4Fe-4S] cluster</name>
        <dbReference type="ChEBI" id="CHEBI:49883"/>
        <label>2</label>
        <note>4Fe-4S-S-AdoMet</note>
    </ligand>
</feature>
<feature type="binding site" evidence="1">
    <location>
        <position position="303"/>
    </location>
    <ligand>
        <name>[4Fe-4S] cluster</name>
        <dbReference type="ChEBI" id="CHEBI:49883"/>
        <label>1</label>
    </ligand>
</feature>
<name>LIPA_MYCSJ</name>
<reference key="1">
    <citation type="submission" date="2007-02" db="EMBL/GenBank/DDBJ databases">
        <title>Complete sequence of Mycobacterium sp. JLS.</title>
        <authorList>
            <consortium name="US DOE Joint Genome Institute"/>
            <person name="Copeland A."/>
            <person name="Lucas S."/>
            <person name="Lapidus A."/>
            <person name="Barry K."/>
            <person name="Detter J.C."/>
            <person name="Glavina del Rio T."/>
            <person name="Hammon N."/>
            <person name="Israni S."/>
            <person name="Dalin E."/>
            <person name="Tice H."/>
            <person name="Pitluck S."/>
            <person name="Chain P."/>
            <person name="Malfatti S."/>
            <person name="Shin M."/>
            <person name="Vergez L."/>
            <person name="Schmutz J."/>
            <person name="Larimer F."/>
            <person name="Land M."/>
            <person name="Hauser L."/>
            <person name="Kyrpides N."/>
            <person name="Mikhailova N."/>
            <person name="Miller C.D."/>
            <person name="Anderson A.J."/>
            <person name="Sims R.C."/>
            <person name="Richardson P."/>
        </authorList>
    </citation>
    <scope>NUCLEOTIDE SEQUENCE [LARGE SCALE GENOMIC DNA]</scope>
    <source>
        <strain>JLS</strain>
    </source>
</reference>
<dbReference type="EC" id="2.8.1.8" evidence="1"/>
<dbReference type="EMBL" id="CP000580">
    <property type="protein sequence ID" value="ABN99105.1"/>
    <property type="molecule type" value="Genomic_DNA"/>
</dbReference>
<dbReference type="SMR" id="A3Q1S8"/>
<dbReference type="KEGG" id="mjl:Mjls_3327"/>
<dbReference type="HOGENOM" id="CLU_033144_2_1_11"/>
<dbReference type="BioCyc" id="MSP164757:G1G8C-3353-MONOMER"/>
<dbReference type="UniPathway" id="UPA00538">
    <property type="reaction ID" value="UER00593"/>
</dbReference>
<dbReference type="GO" id="GO:0005737">
    <property type="term" value="C:cytoplasm"/>
    <property type="evidence" value="ECO:0007669"/>
    <property type="project" value="UniProtKB-SubCell"/>
</dbReference>
<dbReference type="GO" id="GO:0051539">
    <property type="term" value="F:4 iron, 4 sulfur cluster binding"/>
    <property type="evidence" value="ECO:0007669"/>
    <property type="project" value="UniProtKB-UniRule"/>
</dbReference>
<dbReference type="GO" id="GO:0016992">
    <property type="term" value="F:lipoate synthase activity"/>
    <property type="evidence" value="ECO:0007669"/>
    <property type="project" value="UniProtKB-UniRule"/>
</dbReference>
<dbReference type="GO" id="GO:0046872">
    <property type="term" value="F:metal ion binding"/>
    <property type="evidence" value="ECO:0007669"/>
    <property type="project" value="UniProtKB-KW"/>
</dbReference>
<dbReference type="CDD" id="cd01335">
    <property type="entry name" value="Radical_SAM"/>
    <property type="match status" value="1"/>
</dbReference>
<dbReference type="FunFam" id="3.20.20.70:FF:000116">
    <property type="entry name" value="Lipoyl synthase"/>
    <property type="match status" value="1"/>
</dbReference>
<dbReference type="Gene3D" id="3.20.20.70">
    <property type="entry name" value="Aldolase class I"/>
    <property type="match status" value="1"/>
</dbReference>
<dbReference type="HAMAP" id="MF_00206">
    <property type="entry name" value="Lipoyl_synth"/>
    <property type="match status" value="1"/>
</dbReference>
<dbReference type="InterPro" id="IPR013785">
    <property type="entry name" value="Aldolase_TIM"/>
</dbReference>
<dbReference type="InterPro" id="IPR006638">
    <property type="entry name" value="Elp3/MiaA/NifB-like_rSAM"/>
</dbReference>
<dbReference type="InterPro" id="IPR031691">
    <property type="entry name" value="LIAS_N"/>
</dbReference>
<dbReference type="InterPro" id="IPR003698">
    <property type="entry name" value="Lipoyl_synth"/>
</dbReference>
<dbReference type="InterPro" id="IPR007197">
    <property type="entry name" value="rSAM"/>
</dbReference>
<dbReference type="NCBIfam" id="TIGR00510">
    <property type="entry name" value="lipA"/>
    <property type="match status" value="1"/>
</dbReference>
<dbReference type="NCBIfam" id="NF004019">
    <property type="entry name" value="PRK05481.1"/>
    <property type="match status" value="1"/>
</dbReference>
<dbReference type="NCBIfam" id="NF009544">
    <property type="entry name" value="PRK12928.1"/>
    <property type="match status" value="1"/>
</dbReference>
<dbReference type="PANTHER" id="PTHR10949">
    <property type="entry name" value="LIPOYL SYNTHASE"/>
    <property type="match status" value="1"/>
</dbReference>
<dbReference type="PANTHER" id="PTHR10949:SF0">
    <property type="entry name" value="LIPOYL SYNTHASE, MITOCHONDRIAL"/>
    <property type="match status" value="1"/>
</dbReference>
<dbReference type="Pfam" id="PF16881">
    <property type="entry name" value="LIAS_N"/>
    <property type="match status" value="1"/>
</dbReference>
<dbReference type="Pfam" id="PF04055">
    <property type="entry name" value="Radical_SAM"/>
    <property type="match status" value="1"/>
</dbReference>
<dbReference type="PIRSF" id="PIRSF005963">
    <property type="entry name" value="Lipoyl_synth"/>
    <property type="match status" value="1"/>
</dbReference>
<dbReference type="SFLD" id="SFLDF00271">
    <property type="entry name" value="lipoyl_synthase"/>
    <property type="match status" value="1"/>
</dbReference>
<dbReference type="SFLD" id="SFLDG01058">
    <property type="entry name" value="lipoyl_synthase_like"/>
    <property type="match status" value="1"/>
</dbReference>
<dbReference type="SMART" id="SM00729">
    <property type="entry name" value="Elp3"/>
    <property type="match status" value="1"/>
</dbReference>
<dbReference type="SUPFAM" id="SSF102114">
    <property type="entry name" value="Radical SAM enzymes"/>
    <property type="match status" value="1"/>
</dbReference>
<dbReference type="PROSITE" id="PS51918">
    <property type="entry name" value="RADICAL_SAM"/>
    <property type="match status" value="1"/>
</dbReference>
<evidence type="ECO:0000255" key="1">
    <source>
        <dbReference type="HAMAP-Rule" id="MF_00206"/>
    </source>
</evidence>
<evidence type="ECO:0000255" key="2">
    <source>
        <dbReference type="PROSITE-ProRule" id="PRU01266"/>
    </source>
</evidence>
<proteinExistence type="inferred from homology"/>